<sequence length="429" mass="46549">MSEIVDIYAREILDSRGNPTLEVDVFLESGAFGRAAVPSGASTGEREALELRDGDMARYLGKGVLKAVDNVNNEIADELIGMDADDQVAIDNKMLELDGTEFKSKLGANATLGVSLAVAKAAADEAGLSLHKYIGGAGARELPLPMMNILNGGAHADNNVDIQEFMIMPAGARCFAEALRMGAEIFHALKSVLKGKGYNTSVGDEGGFAPNLKSNEEALQVIMEAIVKAGYKPGEDVLLALDVASSELFKDGIYTLENEQQKQKTAAQLIDFYEDLVNRYPIISIEDGMAENDWDGWKLLTDRLGKRIQIVGDDLFVTNPRILKEGIQKGIANSILVKLNQIGTLTETLEAIEMAKRAGYTTVISHRSGETEDTTLADLAVAVNAGQIKTGSLCRTDRVAKYNQLLRIEEELDDCALFRGHDVFYNLKK</sequence>
<comment type="function">
    <text evidence="1">Catalyzes the reversible conversion of 2-phosphoglycerate (2-PG) into phosphoenolpyruvate (PEP). It is essential for the degradation of carbohydrates via glycolysis.</text>
</comment>
<comment type="catalytic activity">
    <reaction evidence="1">
        <text>(2R)-2-phosphoglycerate = phosphoenolpyruvate + H2O</text>
        <dbReference type="Rhea" id="RHEA:10164"/>
        <dbReference type="ChEBI" id="CHEBI:15377"/>
        <dbReference type="ChEBI" id="CHEBI:58289"/>
        <dbReference type="ChEBI" id="CHEBI:58702"/>
        <dbReference type="EC" id="4.2.1.11"/>
    </reaction>
</comment>
<comment type="cofactor">
    <cofactor evidence="1">
        <name>Mg(2+)</name>
        <dbReference type="ChEBI" id="CHEBI:18420"/>
    </cofactor>
    <text evidence="1">Binds a second Mg(2+) ion via substrate during catalysis.</text>
</comment>
<comment type="pathway">
    <text evidence="1">Carbohydrate degradation; glycolysis; pyruvate from D-glyceraldehyde 3-phosphate: step 4/5.</text>
</comment>
<comment type="subcellular location">
    <subcellularLocation>
        <location evidence="1">Cytoplasm</location>
    </subcellularLocation>
    <subcellularLocation>
        <location evidence="1">Secreted</location>
    </subcellularLocation>
    <subcellularLocation>
        <location evidence="1">Cell surface</location>
    </subcellularLocation>
    <text evidence="1">Fractions of enolase are present in both the cytoplasm and on the cell surface.</text>
</comment>
<comment type="similarity">
    <text evidence="1">Belongs to the enolase family.</text>
</comment>
<accession>A1APJ8</accession>
<organism>
    <name type="scientific">Pelobacter propionicus (strain DSM 2379 / NBRC 103807 / OttBd1)</name>
    <dbReference type="NCBI Taxonomy" id="338966"/>
    <lineage>
        <taxon>Bacteria</taxon>
        <taxon>Pseudomonadati</taxon>
        <taxon>Thermodesulfobacteriota</taxon>
        <taxon>Desulfuromonadia</taxon>
        <taxon>Desulfuromonadales</taxon>
        <taxon>Desulfuromonadaceae</taxon>
        <taxon>Pelobacter</taxon>
    </lineage>
</organism>
<evidence type="ECO:0000255" key="1">
    <source>
        <dbReference type="HAMAP-Rule" id="MF_00318"/>
    </source>
</evidence>
<dbReference type="EC" id="4.2.1.11" evidence="1"/>
<dbReference type="EMBL" id="CP000482">
    <property type="protein sequence ID" value="ABK99268.1"/>
    <property type="molecule type" value="Genomic_DNA"/>
</dbReference>
<dbReference type="RefSeq" id="WP_011735545.1">
    <property type="nucleotide sequence ID" value="NC_008609.1"/>
</dbReference>
<dbReference type="SMR" id="A1APJ8"/>
<dbReference type="STRING" id="338966.Ppro_1654"/>
<dbReference type="KEGG" id="ppd:Ppro_1654"/>
<dbReference type="eggNOG" id="COG0148">
    <property type="taxonomic scope" value="Bacteria"/>
</dbReference>
<dbReference type="HOGENOM" id="CLU_031223_2_1_7"/>
<dbReference type="OrthoDB" id="9804716at2"/>
<dbReference type="UniPathway" id="UPA00109">
    <property type="reaction ID" value="UER00187"/>
</dbReference>
<dbReference type="Proteomes" id="UP000006732">
    <property type="component" value="Chromosome"/>
</dbReference>
<dbReference type="GO" id="GO:0009986">
    <property type="term" value="C:cell surface"/>
    <property type="evidence" value="ECO:0007669"/>
    <property type="project" value="UniProtKB-SubCell"/>
</dbReference>
<dbReference type="GO" id="GO:0005576">
    <property type="term" value="C:extracellular region"/>
    <property type="evidence" value="ECO:0007669"/>
    <property type="project" value="UniProtKB-SubCell"/>
</dbReference>
<dbReference type="GO" id="GO:0000015">
    <property type="term" value="C:phosphopyruvate hydratase complex"/>
    <property type="evidence" value="ECO:0007669"/>
    <property type="project" value="InterPro"/>
</dbReference>
<dbReference type="GO" id="GO:0000287">
    <property type="term" value="F:magnesium ion binding"/>
    <property type="evidence" value="ECO:0007669"/>
    <property type="project" value="UniProtKB-UniRule"/>
</dbReference>
<dbReference type="GO" id="GO:0004634">
    <property type="term" value="F:phosphopyruvate hydratase activity"/>
    <property type="evidence" value="ECO:0007669"/>
    <property type="project" value="UniProtKB-UniRule"/>
</dbReference>
<dbReference type="GO" id="GO:0006096">
    <property type="term" value="P:glycolytic process"/>
    <property type="evidence" value="ECO:0007669"/>
    <property type="project" value="UniProtKB-UniRule"/>
</dbReference>
<dbReference type="CDD" id="cd03313">
    <property type="entry name" value="enolase"/>
    <property type="match status" value="1"/>
</dbReference>
<dbReference type="FunFam" id="3.20.20.120:FF:000001">
    <property type="entry name" value="Enolase"/>
    <property type="match status" value="1"/>
</dbReference>
<dbReference type="FunFam" id="3.30.390.10:FF:000001">
    <property type="entry name" value="Enolase"/>
    <property type="match status" value="1"/>
</dbReference>
<dbReference type="Gene3D" id="3.20.20.120">
    <property type="entry name" value="Enolase-like C-terminal domain"/>
    <property type="match status" value="1"/>
</dbReference>
<dbReference type="Gene3D" id="3.30.390.10">
    <property type="entry name" value="Enolase-like, N-terminal domain"/>
    <property type="match status" value="1"/>
</dbReference>
<dbReference type="HAMAP" id="MF_00318">
    <property type="entry name" value="Enolase"/>
    <property type="match status" value="1"/>
</dbReference>
<dbReference type="InterPro" id="IPR000941">
    <property type="entry name" value="Enolase"/>
</dbReference>
<dbReference type="InterPro" id="IPR036849">
    <property type="entry name" value="Enolase-like_C_sf"/>
</dbReference>
<dbReference type="InterPro" id="IPR029017">
    <property type="entry name" value="Enolase-like_N"/>
</dbReference>
<dbReference type="InterPro" id="IPR020810">
    <property type="entry name" value="Enolase_C"/>
</dbReference>
<dbReference type="InterPro" id="IPR020809">
    <property type="entry name" value="Enolase_CS"/>
</dbReference>
<dbReference type="InterPro" id="IPR020811">
    <property type="entry name" value="Enolase_N"/>
</dbReference>
<dbReference type="NCBIfam" id="TIGR01060">
    <property type="entry name" value="eno"/>
    <property type="match status" value="1"/>
</dbReference>
<dbReference type="PANTHER" id="PTHR11902">
    <property type="entry name" value="ENOLASE"/>
    <property type="match status" value="1"/>
</dbReference>
<dbReference type="PANTHER" id="PTHR11902:SF1">
    <property type="entry name" value="ENOLASE"/>
    <property type="match status" value="1"/>
</dbReference>
<dbReference type="Pfam" id="PF00113">
    <property type="entry name" value="Enolase_C"/>
    <property type="match status" value="1"/>
</dbReference>
<dbReference type="Pfam" id="PF03952">
    <property type="entry name" value="Enolase_N"/>
    <property type="match status" value="1"/>
</dbReference>
<dbReference type="PIRSF" id="PIRSF001400">
    <property type="entry name" value="Enolase"/>
    <property type="match status" value="1"/>
</dbReference>
<dbReference type="PRINTS" id="PR00148">
    <property type="entry name" value="ENOLASE"/>
</dbReference>
<dbReference type="SFLD" id="SFLDF00002">
    <property type="entry name" value="enolase"/>
    <property type="match status" value="1"/>
</dbReference>
<dbReference type="SFLD" id="SFLDG00178">
    <property type="entry name" value="enolase"/>
    <property type="match status" value="1"/>
</dbReference>
<dbReference type="SMART" id="SM01192">
    <property type="entry name" value="Enolase_C"/>
    <property type="match status" value="1"/>
</dbReference>
<dbReference type="SMART" id="SM01193">
    <property type="entry name" value="Enolase_N"/>
    <property type="match status" value="1"/>
</dbReference>
<dbReference type="SUPFAM" id="SSF51604">
    <property type="entry name" value="Enolase C-terminal domain-like"/>
    <property type="match status" value="1"/>
</dbReference>
<dbReference type="SUPFAM" id="SSF54826">
    <property type="entry name" value="Enolase N-terminal domain-like"/>
    <property type="match status" value="1"/>
</dbReference>
<dbReference type="PROSITE" id="PS00164">
    <property type="entry name" value="ENOLASE"/>
    <property type="match status" value="1"/>
</dbReference>
<keyword id="KW-0963">Cytoplasm</keyword>
<keyword id="KW-0324">Glycolysis</keyword>
<keyword id="KW-0456">Lyase</keyword>
<keyword id="KW-0460">Magnesium</keyword>
<keyword id="KW-0479">Metal-binding</keyword>
<keyword id="KW-1185">Reference proteome</keyword>
<keyword id="KW-0964">Secreted</keyword>
<proteinExistence type="inferred from homology"/>
<gene>
    <name evidence="1" type="primary">eno</name>
    <name type="ordered locus">Ppro_1654</name>
</gene>
<feature type="chain" id="PRO_1000019231" description="Enolase">
    <location>
        <begin position="1"/>
        <end position="429"/>
    </location>
</feature>
<feature type="active site" description="Proton donor" evidence="1">
    <location>
        <position position="205"/>
    </location>
</feature>
<feature type="active site" description="Proton acceptor" evidence="1">
    <location>
        <position position="338"/>
    </location>
</feature>
<feature type="binding site" evidence="1">
    <location>
        <position position="163"/>
    </location>
    <ligand>
        <name>(2R)-2-phosphoglycerate</name>
        <dbReference type="ChEBI" id="CHEBI:58289"/>
    </ligand>
</feature>
<feature type="binding site" evidence="1">
    <location>
        <position position="242"/>
    </location>
    <ligand>
        <name>Mg(2+)</name>
        <dbReference type="ChEBI" id="CHEBI:18420"/>
    </ligand>
</feature>
<feature type="binding site" evidence="1">
    <location>
        <position position="286"/>
    </location>
    <ligand>
        <name>Mg(2+)</name>
        <dbReference type="ChEBI" id="CHEBI:18420"/>
    </ligand>
</feature>
<feature type="binding site" evidence="1">
    <location>
        <position position="313"/>
    </location>
    <ligand>
        <name>Mg(2+)</name>
        <dbReference type="ChEBI" id="CHEBI:18420"/>
    </ligand>
</feature>
<feature type="binding site" evidence="1">
    <location>
        <position position="338"/>
    </location>
    <ligand>
        <name>(2R)-2-phosphoglycerate</name>
        <dbReference type="ChEBI" id="CHEBI:58289"/>
    </ligand>
</feature>
<feature type="binding site" evidence="1">
    <location>
        <position position="367"/>
    </location>
    <ligand>
        <name>(2R)-2-phosphoglycerate</name>
        <dbReference type="ChEBI" id="CHEBI:58289"/>
    </ligand>
</feature>
<feature type="binding site" evidence="1">
    <location>
        <position position="368"/>
    </location>
    <ligand>
        <name>(2R)-2-phosphoglycerate</name>
        <dbReference type="ChEBI" id="CHEBI:58289"/>
    </ligand>
</feature>
<feature type="binding site" evidence="1">
    <location>
        <position position="389"/>
    </location>
    <ligand>
        <name>(2R)-2-phosphoglycerate</name>
        <dbReference type="ChEBI" id="CHEBI:58289"/>
    </ligand>
</feature>
<name>ENO_PELPD</name>
<protein>
    <recommendedName>
        <fullName evidence="1">Enolase</fullName>
        <ecNumber evidence="1">4.2.1.11</ecNumber>
    </recommendedName>
    <alternativeName>
        <fullName evidence="1">2-phospho-D-glycerate hydro-lyase</fullName>
    </alternativeName>
    <alternativeName>
        <fullName evidence="1">2-phosphoglycerate dehydratase</fullName>
    </alternativeName>
</protein>
<reference key="1">
    <citation type="submission" date="2006-10" db="EMBL/GenBank/DDBJ databases">
        <title>Complete sequence of chromosome of Pelobacter propionicus DSM 2379.</title>
        <authorList>
            <consortium name="US DOE Joint Genome Institute"/>
            <person name="Copeland A."/>
            <person name="Lucas S."/>
            <person name="Lapidus A."/>
            <person name="Barry K."/>
            <person name="Detter J.C."/>
            <person name="Glavina del Rio T."/>
            <person name="Hammon N."/>
            <person name="Israni S."/>
            <person name="Dalin E."/>
            <person name="Tice H."/>
            <person name="Pitluck S."/>
            <person name="Saunders E."/>
            <person name="Brettin T."/>
            <person name="Bruce D."/>
            <person name="Han C."/>
            <person name="Tapia R."/>
            <person name="Schmutz J."/>
            <person name="Larimer F."/>
            <person name="Land M."/>
            <person name="Hauser L."/>
            <person name="Kyrpides N."/>
            <person name="Kim E."/>
            <person name="Lovley D."/>
            <person name="Richardson P."/>
        </authorList>
    </citation>
    <scope>NUCLEOTIDE SEQUENCE [LARGE SCALE GENOMIC DNA]</scope>
    <source>
        <strain>DSM 2379 / NBRC 103807 / OttBd1</strain>
    </source>
</reference>